<feature type="chain" id="PRO_0000063952" description="Aquaporin-5">
    <location>
        <begin position="1"/>
        <end position="265"/>
    </location>
</feature>
<feature type="topological domain" description="Cytoplasmic" evidence="11">
    <location>
        <begin position="1"/>
        <end position="12"/>
    </location>
</feature>
<feature type="transmembrane region" description="Helical" evidence="1">
    <location>
        <begin position="13"/>
        <end position="33"/>
    </location>
</feature>
<feature type="topological domain" description="Extracellular" evidence="11">
    <location>
        <begin position="34"/>
        <end position="39"/>
    </location>
</feature>
<feature type="transmembrane region" description="Helical" evidence="1">
    <location>
        <begin position="40"/>
        <end position="60"/>
    </location>
</feature>
<feature type="topological domain" description="Cytoplasmic" evidence="11">
    <location>
        <begin position="61"/>
        <end position="65"/>
    </location>
</feature>
<feature type="intramembrane region" description="Discontinuously helical" evidence="1">
    <location>
        <begin position="66"/>
        <end position="74"/>
    </location>
</feature>
<feature type="topological domain" description="Cytoplasmic" evidence="11">
    <location>
        <begin position="75"/>
        <end position="87"/>
    </location>
</feature>
<feature type="transmembrane region" description="Helical" evidence="1">
    <location>
        <begin position="88"/>
        <end position="108"/>
    </location>
</feature>
<feature type="topological domain" description="Extracellular" evidence="11">
    <location>
        <begin position="109"/>
        <end position="126"/>
    </location>
</feature>
<feature type="transmembrane region" description="Helical" evidence="1">
    <location>
        <begin position="127"/>
        <end position="147"/>
    </location>
</feature>
<feature type="topological domain" description="Cytoplasmic" evidence="11">
    <location>
        <begin position="148"/>
        <end position="158"/>
    </location>
</feature>
<feature type="transmembrane region" description="Helical" evidence="1">
    <location>
        <begin position="159"/>
        <end position="179"/>
    </location>
</feature>
<feature type="topological domain" description="Extracellular" evidence="11">
    <location>
        <position position="180"/>
    </location>
</feature>
<feature type="intramembrane region" description="Discontinuously helical" evidence="1">
    <location>
        <begin position="181"/>
        <end position="191"/>
    </location>
</feature>
<feature type="topological domain" description="Extracellular" evidence="11">
    <location>
        <begin position="192"/>
        <end position="203"/>
    </location>
</feature>
<feature type="transmembrane region" description="Helical" evidence="1">
    <location>
        <begin position="204"/>
        <end position="224"/>
    </location>
</feature>
<feature type="topological domain" description="Cytoplasmic" evidence="11">
    <location>
        <begin position="225"/>
        <end position="265"/>
    </location>
</feature>
<feature type="short sequence motif" description="NPA 1" evidence="1">
    <location>
        <begin position="69"/>
        <end position="71"/>
    </location>
</feature>
<feature type="short sequence motif" description="NPA 2" evidence="1">
    <location>
        <begin position="185"/>
        <end position="187"/>
    </location>
</feature>
<feature type="glycosylation site" description="N-linked (GlcNAc...) asparagine" evidence="2">
    <location>
        <position position="124"/>
    </location>
</feature>
<organism>
    <name type="scientific">Mus musculus</name>
    <name type="common">Mouse</name>
    <dbReference type="NCBI Taxonomy" id="10090"/>
    <lineage>
        <taxon>Eukaryota</taxon>
        <taxon>Metazoa</taxon>
        <taxon>Chordata</taxon>
        <taxon>Craniata</taxon>
        <taxon>Vertebrata</taxon>
        <taxon>Euteleostomi</taxon>
        <taxon>Mammalia</taxon>
        <taxon>Eutheria</taxon>
        <taxon>Euarchontoglires</taxon>
        <taxon>Glires</taxon>
        <taxon>Rodentia</taxon>
        <taxon>Myomorpha</taxon>
        <taxon>Muroidea</taxon>
        <taxon>Muridae</taxon>
        <taxon>Murinae</taxon>
        <taxon>Mus</taxon>
        <taxon>Mus</taxon>
    </lineage>
</organism>
<reference key="1">
    <citation type="journal article" date="1999" name="Mamm. Genome">
        <title>Cloning and characterization of murine Aqp5: evidence for a conserved aquaporin gene cluster.</title>
        <authorList>
            <person name="Krane C.M."/>
            <person name="Towne J.E."/>
            <person name="Menon A.G."/>
        </authorList>
    </citation>
    <scope>NUCLEOTIDE SEQUENCE [MRNA]</scope>
    <scope>TISSUE SPECIFICITY</scope>
    <source>
        <strain>FEBN</strain>
        <tissue>Lung</tissue>
    </source>
</reference>
<reference key="2">
    <citation type="journal article" date="2005" name="Science">
        <title>The transcriptional landscape of the mammalian genome.</title>
        <authorList>
            <person name="Carninci P."/>
            <person name="Kasukawa T."/>
            <person name="Katayama S."/>
            <person name="Gough J."/>
            <person name="Frith M.C."/>
            <person name="Maeda N."/>
            <person name="Oyama R."/>
            <person name="Ravasi T."/>
            <person name="Lenhard B."/>
            <person name="Wells C."/>
            <person name="Kodzius R."/>
            <person name="Shimokawa K."/>
            <person name="Bajic V.B."/>
            <person name="Brenner S.E."/>
            <person name="Batalov S."/>
            <person name="Forrest A.R."/>
            <person name="Zavolan M."/>
            <person name="Davis M.J."/>
            <person name="Wilming L.G."/>
            <person name="Aidinis V."/>
            <person name="Allen J.E."/>
            <person name="Ambesi-Impiombato A."/>
            <person name="Apweiler R."/>
            <person name="Aturaliya R.N."/>
            <person name="Bailey T.L."/>
            <person name="Bansal M."/>
            <person name="Baxter L."/>
            <person name="Beisel K.W."/>
            <person name="Bersano T."/>
            <person name="Bono H."/>
            <person name="Chalk A.M."/>
            <person name="Chiu K.P."/>
            <person name="Choudhary V."/>
            <person name="Christoffels A."/>
            <person name="Clutterbuck D.R."/>
            <person name="Crowe M.L."/>
            <person name="Dalla E."/>
            <person name="Dalrymple B.P."/>
            <person name="de Bono B."/>
            <person name="Della Gatta G."/>
            <person name="di Bernardo D."/>
            <person name="Down T."/>
            <person name="Engstrom P."/>
            <person name="Fagiolini M."/>
            <person name="Faulkner G."/>
            <person name="Fletcher C.F."/>
            <person name="Fukushima T."/>
            <person name="Furuno M."/>
            <person name="Futaki S."/>
            <person name="Gariboldi M."/>
            <person name="Georgii-Hemming P."/>
            <person name="Gingeras T.R."/>
            <person name="Gojobori T."/>
            <person name="Green R.E."/>
            <person name="Gustincich S."/>
            <person name="Harbers M."/>
            <person name="Hayashi Y."/>
            <person name="Hensch T.K."/>
            <person name="Hirokawa N."/>
            <person name="Hill D."/>
            <person name="Huminiecki L."/>
            <person name="Iacono M."/>
            <person name="Ikeo K."/>
            <person name="Iwama A."/>
            <person name="Ishikawa T."/>
            <person name="Jakt M."/>
            <person name="Kanapin A."/>
            <person name="Katoh M."/>
            <person name="Kawasawa Y."/>
            <person name="Kelso J."/>
            <person name="Kitamura H."/>
            <person name="Kitano H."/>
            <person name="Kollias G."/>
            <person name="Krishnan S.P."/>
            <person name="Kruger A."/>
            <person name="Kummerfeld S.K."/>
            <person name="Kurochkin I.V."/>
            <person name="Lareau L.F."/>
            <person name="Lazarevic D."/>
            <person name="Lipovich L."/>
            <person name="Liu J."/>
            <person name="Liuni S."/>
            <person name="McWilliam S."/>
            <person name="Madan Babu M."/>
            <person name="Madera M."/>
            <person name="Marchionni L."/>
            <person name="Matsuda H."/>
            <person name="Matsuzawa S."/>
            <person name="Miki H."/>
            <person name="Mignone F."/>
            <person name="Miyake S."/>
            <person name="Morris K."/>
            <person name="Mottagui-Tabar S."/>
            <person name="Mulder N."/>
            <person name="Nakano N."/>
            <person name="Nakauchi H."/>
            <person name="Ng P."/>
            <person name="Nilsson R."/>
            <person name="Nishiguchi S."/>
            <person name="Nishikawa S."/>
            <person name="Nori F."/>
            <person name="Ohara O."/>
            <person name="Okazaki Y."/>
            <person name="Orlando V."/>
            <person name="Pang K.C."/>
            <person name="Pavan W.J."/>
            <person name="Pavesi G."/>
            <person name="Pesole G."/>
            <person name="Petrovsky N."/>
            <person name="Piazza S."/>
            <person name="Reed J."/>
            <person name="Reid J.F."/>
            <person name="Ring B.Z."/>
            <person name="Ringwald M."/>
            <person name="Rost B."/>
            <person name="Ruan Y."/>
            <person name="Salzberg S.L."/>
            <person name="Sandelin A."/>
            <person name="Schneider C."/>
            <person name="Schoenbach C."/>
            <person name="Sekiguchi K."/>
            <person name="Semple C.A."/>
            <person name="Seno S."/>
            <person name="Sessa L."/>
            <person name="Sheng Y."/>
            <person name="Shibata Y."/>
            <person name="Shimada H."/>
            <person name="Shimada K."/>
            <person name="Silva D."/>
            <person name="Sinclair B."/>
            <person name="Sperling S."/>
            <person name="Stupka E."/>
            <person name="Sugiura K."/>
            <person name="Sultana R."/>
            <person name="Takenaka Y."/>
            <person name="Taki K."/>
            <person name="Tammoja K."/>
            <person name="Tan S.L."/>
            <person name="Tang S."/>
            <person name="Taylor M.S."/>
            <person name="Tegner J."/>
            <person name="Teichmann S.A."/>
            <person name="Ueda H.R."/>
            <person name="van Nimwegen E."/>
            <person name="Verardo R."/>
            <person name="Wei C.L."/>
            <person name="Yagi K."/>
            <person name="Yamanishi H."/>
            <person name="Zabarovsky E."/>
            <person name="Zhu S."/>
            <person name="Zimmer A."/>
            <person name="Hide W."/>
            <person name="Bult C."/>
            <person name="Grimmond S.M."/>
            <person name="Teasdale R.D."/>
            <person name="Liu E.T."/>
            <person name="Brusic V."/>
            <person name="Quackenbush J."/>
            <person name="Wahlestedt C."/>
            <person name="Mattick J.S."/>
            <person name="Hume D.A."/>
            <person name="Kai C."/>
            <person name="Sasaki D."/>
            <person name="Tomaru Y."/>
            <person name="Fukuda S."/>
            <person name="Kanamori-Katayama M."/>
            <person name="Suzuki M."/>
            <person name="Aoki J."/>
            <person name="Arakawa T."/>
            <person name="Iida J."/>
            <person name="Imamura K."/>
            <person name="Itoh M."/>
            <person name="Kato T."/>
            <person name="Kawaji H."/>
            <person name="Kawagashira N."/>
            <person name="Kawashima T."/>
            <person name="Kojima M."/>
            <person name="Kondo S."/>
            <person name="Konno H."/>
            <person name="Nakano K."/>
            <person name="Ninomiya N."/>
            <person name="Nishio T."/>
            <person name="Okada M."/>
            <person name="Plessy C."/>
            <person name="Shibata K."/>
            <person name="Shiraki T."/>
            <person name="Suzuki S."/>
            <person name="Tagami M."/>
            <person name="Waki K."/>
            <person name="Watahiki A."/>
            <person name="Okamura-Oho Y."/>
            <person name="Suzuki H."/>
            <person name="Kawai J."/>
            <person name="Hayashizaki Y."/>
        </authorList>
    </citation>
    <scope>NUCLEOTIDE SEQUENCE [LARGE SCALE MRNA]</scope>
    <source>
        <strain>C57BL/6J</strain>
        <tissue>Lung</tissue>
        <tissue>Tongue</tissue>
    </source>
</reference>
<reference key="3">
    <citation type="journal article" date="1999" name="J. Biol. Chem.">
        <title>Defective secretion of saliva in transgenic mice lacking aquaporin-5 water channels.</title>
        <authorList>
            <person name="Ma T."/>
            <person name="Song Y."/>
            <person name="Gillespie A."/>
            <person name="Carlson E.J."/>
            <person name="Epstein C.J."/>
            <person name="Verkman A.S."/>
        </authorList>
    </citation>
    <scope>FUNCTION</scope>
    <scope>DISRUPTION PHENOTYPE</scope>
    <scope>SUBCELLULAR LOCATION</scope>
    <scope>TISSUE SPECIFICITY</scope>
</reference>
<reference key="4">
    <citation type="journal article" date="2000" name="J. Clin. Invest.">
        <title>Lung fluid transport in aquaporin-5 knockout mice.</title>
        <authorList>
            <person name="Ma T."/>
            <person name="Fukuda N."/>
            <person name="Song Y."/>
            <person name="Matthay M.A."/>
            <person name="Verkman A.S."/>
        </authorList>
    </citation>
    <scope>FUNCTION</scope>
    <scope>DISRUPTION PHENOTYPE</scope>
    <scope>TISSUE SPECIFICITY</scope>
</reference>
<reference key="5">
    <citation type="journal article" date="2002" name="J. Physiol. (Lond.)">
        <title>Localization of aquaporin-5 in sweat glands and functional analysis using knockout mice.</title>
        <authorList>
            <person name="Song Y."/>
            <person name="Sonawane N."/>
            <person name="Verkman A.S."/>
        </authorList>
    </citation>
    <scope>FUNCTION</scope>
    <scope>SUBCELLULAR LOCATION</scope>
    <scope>DISRUPTION PHENOTYPE</scope>
    <scope>TISSUE SPECIFICITY</scope>
</reference>
<reference key="6">
    <citation type="journal article" date="2006" name="J. Biol. Chem.">
        <title>A role for AQP5 in activation of TRPV4 by hypotonicity: concerted involvement of AQP5 and TRPV4 in regulation of cell volume recovery.</title>
        <authorList>
            <person name="Liu X."/>
            <person name="Bandyopadhyay B.C."/>
            <person name="Bandyopadhyay B."/>
            <person name="Nakamoto T."/>
            <person name="Singh B."/>
            <person name="Liedtke W."/>
            <person name="Melvin J.E."/>
            <person name="Ambudkar I."/>
        </authorList>
    </citation>
    <scope>FUNCTION</scope>
    <scope>INTERACTION WITH TRPV4</scope>
    <scope>SUBCELLULAR LOCATION</scope>
    <scope>TISSUE SPECIFICITY</scope>
    <scope>DISRUPTION PHENOTYPE</scope>
</reference>
<reference key="7">
    <citation type="journal article" date="2007" name="Curr. Eye Res.">
        <title>The difference of aquaporin 5 distribution in acinar and ductal cells in lacrimal and parotid glands.</title>
        <authorList>
            <person name="Sasaki Y."/>
            <person name="Tsubota K."/>
            <person name="Kawedia J.D."/>
            <person name="Menon A.G."/>
            <person name="Yasui M."/>
        </authorList>
    </citation>
    <scope>FUNCTION</scope>
    <scope>DISRUPTION PHENOTYPE</scope>
    <scope>SUBCELLULAR LOCATION</scope>
    <scope>TISSUE SPECIFICITY</scope>
</reference>
<reference key="8">
    <citation type="journal article" date="2010" name="Cell">
        <title>A tissue-specific atlas of mouse protein phosphorylation and expression.</title>
        <authorList>
            <person name="Huttlin E.L."/>
            <person name="Jedrychowski M.P."/>
            <person name="Elias J.E."/>
            <person name="Goswami T."/>
            <person name="Rad R."/>
            <person name="Beausoleil S.A."/>
            <person name="Villen J."/>
            <person name="Haas W."/>
            <person name="Sowa M.E."/>
            <person name="Gygi S.P."/>
        </authorList>
    </citation>
    <scope>IDENTIFICATION BY MASS SPECTROMETRY [LARGE SCALE ANALYSIS]</scope>
    <source>
        <tissue>Lung</tissue>
    </source>
</reference>
<reference key="9">
    <citation type="journal article" date="2013" name="J. Dermatol. Sci.">
        <title>Immunolocalization and translocation of aquaporin-5 water channel in sweat glands.</title>
        <authorList>
            <person name="Inoue R."/>
            <person name="Sohara E."/>
            <person name="Rai T."/>
            <person name="Satoh T."/>
            <person name="Yokozeki H."/>
            <person name="Sasaki S."/>
            <person name="Uchida S."/>
        </authorList>
    </citation>
    <scope>SUBCELLULAR LOCATION</scope>
    <scope>TISSUE SPECIFICITY</scope>
</reference>
<proteinExistence type="evidence at protein level"/>
<gene>
    <name evidence="12" type="primary">Aqp5</name>
</gene>
<evidence type="ECO:0000250" key="1">
    <source>
        <dbReference type="UniProtKB" id="P55064"/>
    </source>
</evidence>
<evidence type="ECO:0000255" key="2"/>
<evidence type="ECO:0000269" key="3">
    <source>
    </source>
</evidence>
<evidence type="ECO:0000269" key="4">
    <source>
    </source>
</evidence>
<evidence type="ECO:0000269" key="5">
    <source>
    </source>
</evidence>
<evidence type="ECO:0000269" key="6">
    <source>
    </source>
</evidence>
<evidence type="ECO:0000269" key="7">
    <source>
    </source>
</evidence>
<evidence type="ECO:0000269" key="8">
    <source>
    </source>
</evidence>
<evidence type="ECO:0000269" key="9">
    <source>
    </source>
</evidence>
<evidence type="ECO:0000303" key="10">
    <source>
    </source>
</evidence>
<evidence type="ECO:0000305" key="11"/>
<evidence type="ECO:0000312" key="12">
    <source>
        <dbReference type="MGI" id="MGI:106215"/>
    </source>
</evidence>
<accession>Q9WTY4</accession>
<accession>Q545H1</accession>
<dbReference type="EMBL" id="AF087654">
    <property type="protein sequence ID" value="AAD32491.1"/>
    <property type="molecule type" value="mRNA"/>
</dbReference>
<dbReference type="EMBL" id="AK009302">
    <property type="protein sequence ID" value="BAB26203.1"/>
    <property type="molecule type" value="mRNA"/>
</dbReference>
<dbReference type="CCDS" id="CCDS27823.1"/>
<dbReference type="RefSeq" id="NP_033831.1">
    <property type="nucleotide sequence ID" value="NM_009701.4"/>
</dbReference>
<dbReference type="SMR" id="Q9WTY4"/>
<dbReference type="FunCoup" id="Q9WTY4">
    <property type="interactions" value="84"/>
</dbReference>
<dbReference type="STRING" id="10090.ENSMUSP00000127611"/>
<dbReference type="GlyCosmos" id="Q9WTY4">
    <property type="glycosylation" value="1 site, No reported glycans"/>
</dbReference>
<dbReference type="GlyGen" id="Q9WTY4">
    <property type="glycosylation" value="1 site"/>
</dbReference>
<dbReference type="iPTMnet" id="Q9WTY4"/>
<dbReference type="PhosphoSitePlus" id="Q9WTY4"/>
<dbReference type="PaxDb" id="10090-ENSMUSP00000127611"/>
<dbReference type="ProteomicsDB" id="273913"/>
<dbReference type="ABCD" id="Q9WTY4">
    <property type="antibodies" value="1 sequenced antibody"/>
</dbReference>
<dbReference type="Antibodypedia" id="26098">
    <property type="antibodies" value="322 antibodies from 33 providers"/>
</dbReference>
<dbReference type="DNASU" id="11830"/>
<dbReference type="Ensembl" id="ENSMUST00000169082.3">
    <property type="protein sequence ID" value="ENSMUSP00000127611.2"/>
    <property type="gene ID" value="ENSMUSG00000044217.19"/>
</dbReference>
<dbReference type="GeneID" id="11830"/>
<dbReference type="KEGG" id="mmu:11830"/>
<dbReference type="UCSC" id="uc007xpt.1">
    <property type="organism name" value="mouse"/>
</dbReference>
<dbReference type="AGR" id="MGI:106215"/>
<dbReference type="CTD" id="362"/>
<dbReference type="MGI" id="MGI:106215">
    <property type="gene designation" value="Aqp5"/>
</dbReference>
<dbReference type="VEuPathDB" id="HostDB:ENSMUSG00000044217"/>
<dbReference type="eggNOG" id="KOG0223">
    <property type="taxonomic scope" value="Eukaryota"/>
</dbReference>
<dbReference type="GeneTree" id="ENSGT00940000161557"/>
<dbReference type="HOGENOM" id="CLU_020019_3_3_1"/>
<dbReference type="InParanoid" id="Q9WTY4"/>
<dbReference type="OMA" id="FWVGPIS"/>
<dbReference type="OrthoDB" id="3222at2759"/>
<dbReference type="PhylomeDB" id="Q9WTY4"/>
<dbReference type="TreeFam" id="TF312940"/>
<dbReference type="Reactome" id="R-MMU-432047">
    <property type="pathway name" value="Passive transport by Aquaporins"/>
</dbReference>
<dbReference type="BioGRID-ORCS" id="11830">
    <property type="hits" value="2 hits in 78 CRISPR screens"/>
</dbReference>
<dbReference type="ChiTaRS" id="Aqp5">
    <property type="organism name" value="mouse"/>
</dbReference>
<dbReference type="PRO" id="PR:Q9WTY4"/>
<dbReference type="Proteomes" id="UP000000589">
    <property type="component" value="Chromosome 15"/>
</dbReference>
<dbReference type="RNAct" id="Q9WTY4">
    <property type="molecule type" value="protein"/>
</dbReference>
<dbReference type="Bgee" id="ENSMUSG00000044217">
    <property type="expression patterns" value="Expressed in submandibular gland and 78 other cell types or tissues"/>
</dbReference>
<dbReference type="ExpressionAtlas" id="Q9WTY4">
    <property type="expression patterns" value="baseline and differential"/>
</dbReference>
<dbReference type="GO" id="GO:0016324">
    <property type="term" value="C:apical plasma membrane"/>
    <property type="evidence" value="ECO:0000314"/>
    <property type="project" value="MGI"/>
</dbReference>
<dbReference type="GO" id="GO:0009925">
    <property type="term" value="C:basal plasma membrane"/>
    <property type="evidence" value="ECO:0000314"/>
    <property type="project" value="MGI"/>
</dbReference>
<dbReference type="GO" id="GO:0030659">
    <property type="term" value="C:cytoplasmic vesicle membrane"/>
    <property type="evidence" value="ECO:0000250"/>
    <property type="project" value="UniProtKB"/>
</dbReference>
<dbReference type="GO" id="GO:0005783">
    <property type="term" value="C:endoplasmic reticulum"/>
    <property type="evidence" value="ECO:0000314"/>
    <property type="project" value="MGI"/>
</dbReference>
<dbReference type="GO" id="GO:0005902">
    <property type="term" value="C:microvillus"/>
    <property type="evidence" value="ECO:0000314"/>
    <property type="project" value="MGI"/>
</dbReference>
<dbReference type="GO" id="GO:0005886">
    <property type="term" value="C:plasma membrane"/>
    <property type="evidence" value="ECO:0000314"/>
    <property type="project" value="MGI"/>
</dbReference>
<dbReference type="GO" id="GO:0042802">
    <property type="term" value="F:identical protein binding"/>
    <property type="evidence" value="ECO:0007669"/>
    <property type="project" value="Ensembl"/>
</dbReference>
<dbReference type="GO" id="GO:0015250">
    <property type="term" value="F:water channel activity"/>
    <property type="evidence" value="ECO:0000250"/>
    <property type="project" value="UniProtKB"/>
</dbReference>
<dbReference type="GO" id="GO:0048593">
    <property type="term" value="P:camera-type eye morphogenesis"/>
    <property type="evidence" value="ECO:0000315"/>
    <property type="project" value="MGI"/>
</dbReference>
<dbReference type="GO" id="GO:0015670">
    <property type="term" value="P:carbon dioxide transport"/>
    <property type="evidence" value="ECO:0007669"/>
    <property type="project" value="Ensembl"/>
</dbReference>
<dbReference type="GO" id="GO:0071476">
    <property type="term" value="P:cellular hypotonic response"/>
    <property type="evidence" value="ECO:0000250"/>
    <property type="project" value="UniProtKB"/>
</dbReference>
<dbReference type="GO" id="GO:0042476">
    <property type="term" value="P:odontogenesis"/>
    <property type="evidence" value="ECO:0007669"/>
    <property type="project" value="Ensembl"/>
</dbReference>
<dbReference type="GO" id="GO:0030157">
    <property type="term" value="P:pancreatic juice secretion"/>
    <property type="evidence" value="ECO:0007669"/>
    <property type="project" value="Ensembl"/>
</dbReference>
<dbReference type="GO" id="GO:0051289">
    <property type="term" value="P:protein homotetramerization"/>
    <property type="evidence" value="ECO:0000250"/>
    <property type="project" value="UniProtKB"/>
</dbReference>
<dbReference type="GO" id="GO:0046541">
    <property type="term" value="P:saliva secretion"/>
    <property type="evidence" value="ECO:0000315"/>
    <property type="project" value="MGI"/>
</dbReference>
<dbReference type="GO" id="GO:0006833">
    <property type="term" value="P:water transport"/>
    <property type="evidence" value="ECO:0000315"/>
    <property type="project" value="MGI"/>
</dbReference>
<dbReference type="CDD" id="cd00333">
    <property type="entry name" value="MIP"/>
    <property type="match status" value="1"/>
</dbReference>
<dbReference type="FunFam" id="1.20.1080.10:FF:000003">
    <property type="entry name" value="Lens fiber major intrinsic"/>
    <property type="match status" value="1"/>
</dbReference>
<dbReference type="Gene3D" id="1.20.1080.10">
    <property type="entry name" value="Glycerol uptake facilitator protein"/>
    <property type="match status" value="1"/>
</dbReference>
<dbReference type="InterPro" id="IPR023271">
    <property type="entry name" value="Aquaporin-like"/>
</dbReference>
<dbReference type="InterPro" id="IPR023276">
    <property type="entry name" value="Aquaporin_5"/>
</dbReference>
<dbReference type="InterPro" id="IPR034294">
    <property type="entry name" value="Aquaporin_transptr"/>
</dbReference>
<dbReference type="InterPro" id="IPR000425">
    <property type="entry name" value="MIP"/>
</dbReference>
<dbReference type="InterPro" id="IPR022357">
    <property type="entry name" value="MIP_CS"/>
</dbReference>
<dbReference type="NCBIfam" id="TIGR00861">
    <property type="entry name" value="MIP"/>
    <property type="match status" value="1"/>
</dbReference>
<dbReference type="PANTHER" id="PTHR19139">
    <property type="entry name" value="AQUAPORIN TRANSPORTER"/>
    <property type="match status" value="1"/>
</dbReference>
<dbReference type="PANTHER" id="PTHR19139:SF38">
    <property type="entry name" value="AQUAPORIN-5"/>
    <property type="match status" value="1"/>
</dbReference>
<dbReference type="Pfam" id="PF00230">
    <property type="entry name" value="MIP"/>
    <property type="match status" value="1"/>
</dbReference>
<dbReference type="PRINTS" id="PR02017">
    <property type="entry name" value="AQUAPORIN5"/>
</dbReference>
<dbReference type="PRINTS" id="PR00783">
    <property type="entry name" value="MINTRINSICP"/>
</dbReference>
<dbReference type="SUPFAM" id="SSF81338">
    <property type="entry name" value="Aquaporin-like"/>
    <property type="match status" value="1"/>
</dbReference>
<dbReference type="PROSITE" id="PS00221">
    <property type="entry name" value="MIP"/>
    <property type="match status" value="1"/>
</dbReference>
<sequence length="265" mass="28274">MKKEVCSVAFFKAVFAEFLATLIFVFFGLGSALKWPSALPTILQISIAFGLAIGTLAQALGPVSGGHINPAITLALLIGNQISLLRAIFYVAAQLVGAIAGAGILYWLAPGNARGNLAVNALSNNTTPGKAVVVELILTFQLALCIFSSTDSRRTSPVGSPALSIGLSVTLGHLVGIYFTGCSMNPARSFGPAVVMNRFSPSHWVFWVGPIVGAVLAAILYFYLLFPSSLSLHDRVAVVKGTYEPEEDWEDHREERKKTIELTAH</sequence>
<name>AQP5_MOUSE</name>
<comment type="function">
    <text evidence="1 4 5 6 7 8">Aquaporins form homotetrameric transmembrane channels, with each monomer independently mediating water transport across the plasma membrane along its osmotic gradient (By similarity). Plays an important role in fluid secretion in salivary glands (PubMed:10400615, PubMed:16571723, PubMed:18027168). Required for TRPV4 activation by hypotonicity. Together with TRPV4, controls regulatory volume decrease in salivary epithelial cells (PubMed:16571723). Seems to play a redundant role in water transport in the eye, lung and in sweat glands (PubMed:10619865, PubMed:12042359, PubMed:18027168).</text>
</comment>
<comment type="catalytic activity">
    <reaction evidence="1">
        <text>H2O(in) = H2O(out)</text>
        <dbReference type="Rhea" id="RHEA:29667"/>
        <dbReference type="ChEBI" id="CHEBI:15377"/>
    </reaction>
</comment>
<comment type="subunit">
    <text evidence="1 7">Homotetramer; each monomer provides an independent water pore (By similarity). Interacts with TRPV4; the interaction is probably indirect and regulates TRPV4 activation by hypotonicity (PubMed:16571723).</text>
</comment>
<comment type="subcellular location">
    <subcellularLocation>
        <location evidence="4 6 7 8 9">Apical cell membrane</location>
        <topology evidence="1">Multi-pass membrane protein</topology>
    </subcellularLocation>
    <subcellularLocation>
        <location evidence="1">Cell membrane</location>
        <topology evidence="1">Multi-pass membrane protein</topology>
    </subcellularLocation>
    <subcellularLocation>
        <location evidence="9">Cytoplasmic vesicle membrane</location>
        <topology evidence="1">Multi-pass membrane protein</topology>
    </subcellularLocation>
    <text evidence="1">Hypotonicity increases location at the cell membrane. Phosphorylation decreases location at the cell membrane.</text>
</comment>
<comment type="tissue specificity">
    <text evidence="3 4 5 6 7 8 9">Detected at the luminal membrane of secretory epithelial cells in hindpaw sweat glands (PubMed:12042359, PubMed:23473857). Detected in acinar cells in salivary glands, in duct cells in lacrimal glands and in lung (at protein level) (PubMed:10337625, PubMed:10400615, PubMed:10619865, PubMed:16571723, PubMed:18027168). Detected in lung, parotid, submandibular, sublingual, and lacrimal gland tissues (PubMed:10337625).</text>
</comment>
<comment type="domain">
    <text evidence="1">Aquaporins contain two tandem repeats each containing three membrane-spanning domains and a pore-forming loop with the signature motif Asn-Pro-Ala (NPA).</text>
</comment>
<comment type="disruption phenotype">
    <text evidence="4 5 6 7 8">Homozygous mice are born at less than the expected Mendelian rate, indicative of embryonic lethality (PubMed:10400615, PubMed:10619865). After weaning, mice display decreased pilocarbine-induced saliva secretion, and their saliva displays increased osmolality and viscosity (PubMed:10400615, PubMed:18027168). Mice display reduced Ca2+ entry and loss of regulatory volume decrease in response to hypotonicity in acinar cells. HTS-stimulated Ca2+ entry is significantly decreased in submandibular gland acini and almost completely abolished in parotid acini (PubMed:16571723). Lung airspace-capillary osmotic water permeability is strongly decreased. In contrast, there is no change in alveolar fluid clearance (PubMed:10619865). Paws of mutant mice display normal sweat secretion (PubMed:12042359). Tear secretion is not changed in mutant mice (PubMed:18027168).</text>
</comment>
<comment type="similarity">
    <text evidence="11">Belongs to the MIP/aquaporin (TC 1.A.8) family.</text>
</comment>
<protein>
    <recommendedName>
        <fullName evidence="10">Aquaporin-5</fullName>
        <shortName>AQP-5</shortName>
    </recommendedName>
</protein>
<keyword id="KW-1003">Cell membrane</keyword>
<keyword id="KW-0968">Cytoplasmic vesicle</keyword>
<keyword id="KW-0325">Glycoprotein</keyword>
<keyword id="KW-0472">Membrane</keyword>
<keyword id="KW-1185">Reference proteome</keyword>
<keyword id="KW-0677">Repeat</keyword>
<keyword id="KW-0812">Transmembrane</keyword>
<keyword id="KW-1133">Transmembrane helix</keyword>
<keyword id="KW-0813">Transport</keyword>